<sequence length="191" mass="20037">MSAVLIAVLALLALCLLGGAILGFAAVRFRVEGDPIAEQINALLPQTQCGQCGYPGCKPYAEAIAGGDKINKCPPGGEATIQALADLLDVEPEPLDAEGGEKPQMVAYIREAECIGCTKCIQACPVDAIVGAARQMHTVIISECTGCDLCVEPCPVDCIDMIEVGSNLQSWKWNRPLAPGQLIATDREQAA</sequence>
<comment type="function">
    <text evidence="1">Part of a membrane-bound complex that couples electron transfer with translocation of ions across the membrane.</text>
</comment>
<comment type="cofactor">
    <cofactor evidence="1">
        <name>[4Fe-4S] cluster</name>
        <dbReference type="ChEBI" id="CHEBI:49883"/>
    </cofactor>
    <text evidence="1">Binds 3 [4Fe-4S] clusters.</text>
</comment>
<comment type="subunit">
    <text evidence="1">The complex is composed of six subunits: RnfA, RnfB, RnfC, RnfD, RnfE and RnfG.</text>
</comment>
<comment type="subcellular location">
    <subcellularLocation>
        <location evidence="1">Cell inner membrane</location>
    </subcellularLocation>
</comment>
<comment type="similarity">
    <text evidence="1">Belongs to the 4Fe4S bacterial-type ferredoxin family. RnfB subfamily.</text>
</comment>
<reference key="1">
    <citation type="journal article" date="2008" name="Proc. Natl. Acad. Sci. U.S.A.">
        <title>Nitrogen fixation island and rhizosphere competence traits in the genome of root-associated Pseudomonas stutzeri A1501.</title>
        <authorList>
            <person name="Yan Y."/>
            <person name="Yang J."/>
            <person name="Dou Y."/>
            <person name="Chen M."/>
            <person name="Ping S."/>
            <person name="Peng J."/>
            <person name="Lu W."/>
            <person name="Zhang W."/>
            <person name="Yao Z."/>
            <person name="Li H."/>
            <person name="Liu W."/>
            <person name="He S."/>
            <person name="Geng L."/>
            <person name="Zhang X."/>
            <person name="Yang F."/>
            <person name="Yu H."/>
            <person name="Zhan Y."/>
            <person name="Li D."/>
            <person name="Lin Z."/>
            <person name="Wang Y."/>
            <person name="Elmerich C."/>
            <person name="Lin M."/>
            <person name="Jin Q."/>
        </authorList>
    </citation>
    <scope>NUCLEOTIDE SEQUENCE [LARGE SCALE GENOMIC DNA]</scope>
    <source>
        <strain>A1501</strain>
    </source>
</reference>
<dbReference type="EC" id="7.-.-.-" evidence="1"/>
<dbReference type="EMBL" id="CP000304">
    <property type="protein sequence ID" value="ABP78906.1"/>
    <property type="molecule type" value="Genomic_DNA"/>
</dbReference>
<dbReference type="KEGG" id="psa:PST_1211"/>
<dbReference type="eggNOG" id="COG2878">
    <property type="taxonomic scope" value="Bacteria"/>
</dbReference>
<dbReference type="HOGENOM" id="CLU_063448_2_0_6"/>
<dbReference type="Proteomes" id="UP000000233">
    <property type="component" value="Chromosome"/>
</dbReference>
<dbReference type="GO" id="GO:0005886">
    <property type="term" value="C:plasma membrane"/>
    <property type="evidence" value="ECO:0007669"/>
    <property type="project" value="UniProtKB-SubCell"/>
</dbReference>
<dbReference type="GO" id="GO:0051539">
    <property type="term" value="F:4 iron, 4 sulfur cluster binding"/>
    <property type="evidence" value="ECO:0007669"/>
    <property type="project" value="UniProtKB-UniRule"/>
</dbReference>
<dbReference type="GO" id="GO:0009055">
    <property type="term" value="F:electron transfer activity"/>
    <property type="evidence" value="ECO:0007669"/>
    <property type="project" value="InterPro"/>
</dbReference>
<dbReference type="GO" id="GO:0046872">
    <property type="term" value="F:metal ion binding"/>
    <property type="evidence" value="ECO:0007669"/>
    <property type="project" value="UniProtKB-KW"/>
</dbReference>
<dbReference type="GO" id="GO:0022900">
    <property type="term" value="P:electron transport chain"/>
    <property type="evidence" value="ECO:0007669"/>
    <property type="project" value="UniProtKB-UniRule"/>
</dbReference>
<dbReference type="FunFam" id="1.10.15.40:FF:000001">
    <property type="entry name" value="Ion-translocating oxidoreductase complex subunit B"/>
    <property type="match status" value="1"/>
</dbReference>
<dbReference type="Gene3D" id="3.30.70.20">
    <property type="match status" value="1"/>
</dbReference>
<dbReference type="Gene3D" id="1.10.15.40">
    <property type="entry name" value="Electron transport complex subunit B, putative Fe-S cluster"/>
    <property type="match status" value="1"/>
</dbReference>
<dbReference type="HAMAP" id="MF_00463">
    <property type="entry name" value="RsxB_RnfB"/>
    <property type="match status" value="1"/>
</dbReference>
<dbReference type="InterPro" id="IPR007202">
    <property type="entry name" value="4Fe-4S_dom"/>
</dbReference>
<dbReference type="InterPro" id="IPR017896">
    <property type="entry name" value="4Fe4S_Fe-S-bd"/>
</dbReference>
<dbReference type="InterPro" id="IPR017900">
    <property type="entry name" value="4Fe4S_Fe_S_CS"/>
</dbReference>
<dbReference type="InterPro" id="IPR010207">
    <property type="entry name" value="Elect_transpt_cplx_RnfB/RsxB"/>
</dbReference>
<dbReference type="InterPro" id="IPR016463">
    <property type="entry name" value="RnfB/RsxB_Proteobac"/>
</dbReference>
<dbReference type="InterPro" id="IPR050294">
    <property type="entry name" value="RnfB_subfamily"/>
</dbReference>
<dbReference type="NCBIfam" id="NF003475">
    <property type="entry name" value="PRK05113.1"/>
    <property type="match status" value="1"/>
</dbReference>
<dbReference type="NCBIfam" id="TIGR01944">
    <property type="entry name" value="rnfB"/>
    <property type="match status" value="1"/>
</dbReference>
<dbReference type="PANTHER" id="PTHR42859:SF3">
    <property type="entry name" value="ION-TRANSLOCATING OXIDOREDUCTASE COMPLEX SUBUNIT B"/>
    <property type="match status" value="1"/>
</dbReference>
<dbReference type="PANTHER" id="PTHR42859">
    <property type="entry name" value="OXIDOREDUCTASE"/>
    <property type="match status" value="1"/>
</dbReference>
<dbReference type="Pfam" id="PF14697">
    <property type="entry name" value="Fer4_21"/>
    <property type="match status" value="1"/>
</dbReference>
<dbReference type="Pfam" id="PF04060">
    <property type="entry name" value="FeS"/>
    <property type="match status" value="1"/>
</dbReference>
<dbReference type="PIRSF" id="PIRSF005784">
    <property type="entry name" value="Elect_transpt_RnfB"/>
    <property type="match status" value="1"/>
</dbReference>
<dbReference type="SUPFAM" id="SSF54862">
    <property type="entry name" value="4Fe-4S ferredoxins"/>
    <property type="match status" value="1"/>
</dbReference>
<dbReference type="PROSITE" id="PS51656">
    <property type="entry name" value="4FE4S"/>
    <property type="match status" value="1"/>
</dbReference>
<dbReference type="PROSITE" id="PS00198">
    <property type="entry name" value="4FE4S_FER_1"/>
    <property type="match status" value="2"/>
</dbReference>
<dbReference type="PROSITE" id="PS51379">
    <property type="entry name" value="4FE4S_FER_2"/>
    <property type="match status" value="2"/>
</dbReference>
<keyword id="KW-0004">4Fe-4S</keyword>
<keyword id="KW-0997">Cell inner membrane</keyword>
<keyword id="KW-1003">Cell membrane</keyword>
<keyword id="KW-0249">Electron transport</keyword>
<keyword id="KW-0408">Iron</keyword>
<keyword id="KW-0411">Iron-sulfur</keyword>
<keyword id="KW-0472">Membrane</keyword>
<keyword id="KW-0479">Metal-binding</keyword>
<keyword id="KW-1185">Reference proteome</keyword>
<keyword id="KW-0677">Repeat</keyword>
<keyword id="KW-1278">Translocase</keyword>
<keyword id="KW-0813">Transport</keyword>
<name>RNFB_STUS1</name>
<accession>A4VIV5</accession>
<organism>
    <name type="scientific">Stutzerimonas stutzeri (strain A1501)</name>
    <name type="common">Pseudomonas stutzeri</name>
    <dbReference type="NCBI Taxonomy" id="379731"/>
    <lineage>
        <taxon>Bacteria</taxon>
        <taxon>Pseudomonadati</taxon>
        <taxon>Pseudomonadota</taxon>
        <taxon>Gammaproteobacteria</taxon>
        <taxon>Pseudomonadales</taxon>
        <taxon>Pseudomonadaceae</taxon>
        <taxon>Stutzerimonas</taxon>
    </lineage>
</organism>
<protein>
    <recommendedName>
        <fullName evidence="1">Ion-translocating oxidoreductase complex subunit B</fullName>
        <ecNumber evidence="1">7.-.-.-</ecNumber>
    </recommendedName>
    <alternativeName>
        <fullName evidence="1">Rnf electron transport complex subunit B</fullName>
    </alternativeName>
</protein>
<gene>
    <name evidence="1" type="primary">rnfB</name>
    <name type="ordered locus">PST_1211</name>
</gene>
<proteinExistence type="inferred from homology"/>
<evidence type="ECO:0000255" key="1">
    <source>
        <dbReference type="HAMAP-Rule" id="MF_00463"/>
    </source>
</evidence>
<feature type="chain" id="PRO_1000081163" description="Ion-translocating oxidoreductase complex subunit B">
    <location>
        <begin position="1"/>
        <end position="191"/>
    </location>
</feature>
<feature type="domain" description="4Fe-4S" evidence="1">
    <location>
        <begin position="32"/>
        <end position="90"/>
    </location>
</feature>
<feature type="domain" description="4Fe-4S ferredoxin-type 1" evidence="1">
    <location>
        <begin position="105"/>
        <end position="134"/>
    </location>
</feature>
<feature type="domain" description="4Fe-4S ferredoxin-type 2" evidence="1">
    <location>
        <begin position="135"/>
        <end position="164"/>
    </location>
</feature>
<feature type="region of interest" description="Hydrophobic" evidence="1">
    <location>
        <begin position="1"/>
        <end position="26"/>
    </location>
</feature>
<feature type="binding site" evidence="1">
    <location>
        <position position="49"/>
    </location>
    <ligand>
        <name>[4Fe-4S] cluster</name>
        <dbReference type="ChEBI" id="CHEBI:49883"/>
        <label>1</label>
    </ligand>
</feature>
<feature type="binding site" evidence="1">
    <location>
        <position position="52"/>
    </location>
    <ligand>
        <name>[4Fe-4S] cluster</name>
        <dbReference type="ChEBI" id="CHEBI:49883"/>
        <label>1</label>
    </ligand>
</feature>
<feature type="binding site" evidence="1">
    <location>
        <position position="57"/>
    </location>
    <ligand>
        <name>[4Fe-4S] cluster</name>
        <dbReference type="ChEBI" id="CHEBI:49883"/>
        <label>1</label>
    </ligand>
</feature>
<feature type="binding site" evidence="1">
    <location>
        <position position="73"/>
    </location>
    <ligand>
        <name>[4Fe-4S] cluster</name>
        <dbReference type="ChEBI" id="CHEBI:49883"/>
        <label>1</label>
    </ligand>
</feature>
<feature type="binding site" evidence="1">
    <location>
        <position position="114"/>
    </location>
    <ligand>
        <name>[4Fe-4S] cluster</name>
        <dbReference type="ChEBI" id="CHEBI:49883"/>
        <label>2</label>
    </ligand>
</feature>
<feature type="binding site" evidence="1">
    <location>
        <position position="117"/>
    </location>
    <ligand>
        <name>[4Fe-4S] cluster</name>
        <dbReference type="ChEBI" id="CHEBI:49883"/>
        <label>2</label>
    </ligand>
</feature>
<feature type="binding site" evidence="1">
    <location>
        <position position="120"/>
    </location>
    <ligand>
        <name>[4Fe-4S] cluster</name>
        <dbReference type="ChEBI" id="CHEBI:49883"/>
        <label>2</label>
    </ligand>
</feature>
<feature type="binding site" evidence="1">
    <location>
        <position position="124"/>
    </location>
    <ligand>
        <name>[4Fe-4S] cluster</name>
        <dbReference type="ChEBI" id="CHEBI:49883"/>
        <label>3</label>
    </ligand>
</feature>
<feature type="binding site" evidence="1">
    <location>
        <position position="144"/>
    </location>
    <ligand>
        <name>[4Fe-4S] cluster</name>
        <dbReference type="ChEBI" id="CHEBI:49883"/>
        <label>3</label>
    </ligand>
</feature>
<feature type="binding site" evidence="1">
    <location>
        <position position="147"/>
    </location>
    <ligand>
        <name>[4Fe-4S] cluster</name>
        <dbReference type="ChEBI" id="CHEBI:49883"/>
        <label>3</label>
    </ligand>
</feature>
<feature type="binding site" evidence="1">
    <location>
        <position position="150"/>
    </location>
    <ligand>
        <name>[4Fe-4S] cluster</name>
        <dbReference type="ChEBI" id="CHEBI:49883"/>
        <label>3</label>
    </ligand>
</feature>
<feature type="binding site" evidence="1">
    <location>
        <position position="154"/>
    </location>
    <ligand>
        <name>[4Fe-4S] cluster</name>
        <dbReference type="ChEBI" id="CHEBI:49883"/>
        <label>2</label>
    </ligand>
</feature>